<keyword id="KW-0002">3D-structure</keyword>
<keyword id="KW-0029">Amino-acid transport</keyword>
<keyword id="KW-0997">Cell inner membrane</keyword>
<keyword id="KW-1003">Cell membrane</keyword>
<keyword id="KW-0472">Membrane</keyword>
<keyword id="KW-1185">Reference proteome</keyword>
<keyword id="KW-0812">Transmembrane</keyword>
<keyword id="KW-1133">Transmembrane helix</keyword>
<keyword id="KW-0813">Transport</keyword>
<protein>
    <recommendedName>
        <fullName evidence="5">Ergothioneine transport permease/ergothioneine binding protein EgtU</fullName>
    </recommendedName>
</protein>
<proteinExistence type="evidence at protein level"/>
<name>EGTU_HELPG</name>
<accession>B5Z7I3</accession>
<evidence type="ECO:0000255" key="1"/>
<evidence type="ECO:0000255" key="2">
    <source>
        <dbReference type="PROSITE-ProRule" id="PRU00441"/>
    </source>
</evidence>
<evidence type="ECO:0000269" key="3">
    <source>
    </source>
</evidence>
<evidence type="ECO:0000303" key="4">
    <source>
    </source>
</evidence>
<evidence type="ECO:0000305" key="5"/>
<evidence type="ECO:0000305" key="6">
    <source>
    </source>
</evidence>
<evidence type="ECO:0000312" key="7">
    <source>
        <dbReference type="EMBL" id="ACI27532.1"/>
    </source>
</evidence>
<feature type="chain" id="PRO_0000457658" description="Ergothioneine transport permease/ergothioneine binding protein EgtU">
    <location>
        <begin position="1"/>
        <end position="553"/>
    </location>
</feature>
<feature type="transmembrane region" description="Helical" evidence="1">
    <location>
        <begin position="61"/>
        <end position="81"/>
    </location>
</feature>
<feature type="transmembrane region" description="Helical" evidence="1">
    <location>
        <begin position="98"/>
        <end position="118"/>
    </location>
</feature>
<feature type="transmembrane region" description="Helical" evidence="1">
    <location>
        <begin position="122"/>
        <end position="142"/>
    </location>
</feature>
<feature type="transmembrane region" description="Helical" evidence="1">
    <location>
        <begin position="182"/>
        <end position="202"/>
    </location>
</feature>
<feature type="transmembrane region" description="Helical" evidence="1">
    <location>
        <begin position="219"/>
        <end position="239"/>
    </location>
</feature>
<feature type="transmembrane region" description="Helical" evidence="1">
    <location>
        <begin position="261"/>
        <end position="281"/>
    </location>
</feature>
<feature type="topological domain" description="Periplasmic" evidence="6">
    <location>
        <begin position="282"/>
        <end position="553"/>
    </location>
</feature>
<feature type="domain" description="ABC transmembrane type-1" evidence="2">
    <location>
        <begin position="57"/>
        <end position="236"/>
    </location>
</feature>
<feature type="region of interest" description="Ergothioneine binding domain" evidence="6">
    <location>
        <begin position="288"/>
        <end position="549"/>
    </location>
</feature>
<feature type="mutagenesis site" description="Disrupts EGT binding." evidence="3">
    <original>Y</original>
    <variation>A</variation>
    <location>
        <position position="390"/>
    </location>
</feature>
<feature type="mutagenesis site" description="Retains EGT binding." evidence="3">
    <original>Y</original>
    <variation>F</variation>
    <location>
        <position position="390"/>
    </location>
</feature>
<feature type="mutagenesis site" description="Retains EGT binding." evidence="3">
    <original>R</original>
    <variation>A</variation>
    <location>
        <position position="454"/>
    </location>
</feature>
<feature type="mutagenesis site" description="Disrupts EGT binding." evidence="3">
    <original>R</original>
    <variation>E</variation>
    <location>
        <position position="454"/>
    </location>
</feature>
<gene>
    <name evidence="4" type="primary">egtU</name>
    <name evidence="7" type="ordered locus">HPG27_777</name>
</gene>
<organism>
    <name type="scientific">Helicobacter pylori (strain G27)</name>
    <dbReference type="NCBI Taxonomy" id="563041"/>
    <lineage>
        <taxon>Bacteria</taxon>
        <taxon>Pseudomonadati</taxon>
        <taxon>Campylobacterota</taxon>
        <taxon>Epsilonproteobacteria</taxon>
        <taxon>Campylobacterales</taxon>
        <taxon>Helicobacteraceae</taxon>
        <taxon>Helicobacter</taxon>
    </lineage>
</organism>
<dbReference type="EMBL" id="CP001173">
    <property type="protein sequence ID" value="ACI27532.1"/>
    <property type="molecule type" value="Genomic_DNA"/>
</dbReference>
<dbReference type="RefSeq" id="WP_000901309.1">
    <property type="nucleotide sequence ID" value="NC_011333.1"/>
</dbReference>
<dbReference type="PDB" id="8DP6">
    <property type="method" value="X-ray"/>
    <property type="resolution" value="1.30 A"/>
    <property type="chains" value="A/B=282-553"/>
</dbReference>
<dbReference type="PDB" id="8DP7">
    <property type="method" value="X-ray"/>
    <property type="resolution" value="3.35 A"/>
    <property type="chains" value="A/B/C/D/E=282-553"/>
</dbReference>
<dbReference type="PDBsum" id="8DP6"/>
<dbReference type="PDBsum" id="8DP7"/>
<dbReference type="SMR" id="B5Z7I3"/>
<dbReference type="KEGG" id="hpg:HPG27_777"/>
<dbReference type="HOGENOM" id="CLU_038355_0_0_7"/>
<dbReference type="Proteomes" id="UP000001735">
    <property type="component" value="Chromosome"/>
</dbReference>
<dbReference type="GO" id="GO:0043190">
    <property type="term" value="C:ATP-binding cassette (ABC) transporter complex"/>
    <property type="evidence" value="ECO:0007669"/>
    <property type="project" value="InterPro"/>
</dbReference>
<dbReference type="GO" id="GO:0022857">
    <property type="term" value="F:transmembrane transporter activity"/>
    <property type="evidence" value="ECO:0007669"/>
    <property type="project" value="InterPro"/>
</dbReference>
<dbReference type="GO" id="GO:0006865">
    <property type="term" value="P:amino acid transport"/>
    <property type="evidence" value="ECO:0007669"/>
    <property type="project" value="UniProtKB-KW"/>
</dbReference>
<dbReference type="GO" id="GO:0031460">
    <property type="term" value="P:glycine betaine transport"/>
    <property type="evidence" value="ECO:0007669"/>
    <property type="project" value="TreeGrafter"/>
</dbReference>
<dbReference type="CDD" id="cd06261">
    <property type="entry name" value="TM_PBP2"/>
    <property type="match status" value="1"/>
</dbReference>
<dbReference type="Gene3D" id="1.10.3720.10">
    <property type="entry name" value="MetI-like"/>
    <property type="match status" value="1"/>
</dbReference>
<dbReference type="Gene3D" id="3.40.190.120">
    <property type="entry name" value="Osmoprotection protein (prox), domain 2"/>
    <property type="match status" value="1"/>
</dbReference>
<dbReference type="Gene3D" id="3.40.190.10">
    <property type="entry name" value="Periplasmic binding protein-like II"/>
    <property type="match status" value="1"/>
</dbReference>
<dbReference type="InterPro" id="IPR007210">
    <property type="entry name" value="ABC_Gly_betaine_transp_sub-bd"/>
</dbReference>
<dbReference type="InterPro" id="IPR051204">
    <property type="entry name" value="ABC_transp_perm/SBD"/>
</dbReference>
<dbReference type="InterPro" id="IPR000515">
    <property type="entry name" value="MetI-like"/>
</dbReference>
<dbReference type="InterPro" id="IPR035906">
    <property type="entry name" value="MetI-like_sf"/>
</dbReference>
<dbReference type="PANTHER" id="PTHR30177">
    <property type="entry name" value="GLYCINE BETAINE/L-PROLINE TRANSPORT SYSTEM PERMEASE PROTEIN PROW"/>
    <property type="match status" value="1"/>
</dbReference>
<dbReference type="PANTHER" id="PTHR30177:SF4">
    <property type="entry name" value="OSMOPROTECTANT IMPORT PERMEASE PROTEIN OSMW"/>
    <property type="match status" value="1"/>
</dbReference>
<dbReference type="Pfam" id="PF00528">
    <property type="entry name" value="BPD_transp_1"/>
    <property type="match status" value="1"/>
</dbReference>
<dbReference type="Pfam" id="PF04069">
    <property type="entry name" value="OpuAC"/>
    <property type="match status" value="1"/>
</dbReference>
<dbReference type="SUPFAM" id="SSF161098">
    <property type="entry name" value="MetI-like"/>
    <property type="match status" value="1"/>
</dbReference>
<dbReference type="SUPFAM" id="SSF53850">
    <property type="entry name" value="Periplasmic binding protein-like II"/>
    <property type="match status" value="1"/>
</dbReference>
<dbReference type="PROSITE" id="PS50928">
    <property type="entry name" value="ABC_TM1"/>
    <property type="match status" value="1"/>
</dbReference>
<comment type="function">
    <text evidence="3 5">Part of the ABC transporter complex EgtUV involved in the uptake of ergothioneine (EGT), a natural low-molecular weight (LMW) thiol antioxidant which protects H.pylori against bleach stress (PubMed:36347253). Responsible for the translocation of the substrate across the membrane (Probable). Also contains a C-terminal periplasmic solute-binding domain (SBD) which binds to ergothioneine with low-micromolar affinity (PubMed:36347253). Cannot bind the structurally similar compounds glycine betaine, choline, proline, carnitine or histidine (PubMed:36347253).</text>
</comment>
<comment type="subunit">
    <text evidence="6">The complex is composed of two ATP-binding proteins (EgtV) and two transmembrane proteins (EgtU).</text>
</comment>
<comment type="subcellular location">
    <subcellularLocation>
        <location evidence="6">Cell inner membrane</location>
        <topology evidence="1">Multi-pass membrane protein</topology>
    </subcellularLocation>
</comment>
<comment type="domain">
    <text evidence="3">In EgtU the transmembrane domain (TMD) and the solute-binding domain (SBD) are fused.</text>
</comment>
<comment type="disruption phenotype">
    <text evidence="3">Disruption of the gene inhibits EGT uptake.</text>
</comment>
<comment type="miscellaneous">
    <text evidence="3">The gastric pathogen H.pylori is unable to synthesize ergothioneine (PubMed:36347253). During infection, the EgtUV ABC transporter gives H.pylori a competitive colonization avantage in the host gastric environment by allowing the uptake of this human dietary antioxidant, which is present at high levels in gastrointestinal tissues (PubMed:36347253).</text>
</comment>
<comment type="similarity">
    <text evidence="5">In the N-terminal section; belongs to the binding-protein-dependent transport system permease family.</text>
</comment>
<comment type="similarity">
    <text evidence="5">In the C-terminal section; belongs to the OsmX family.</text>
</comment>
<sequence>MLGMGVFKQLIKELYEWLLHSMDMATQHLVAIVLKISVVKYLIKEFHDRFIYFIDLLAQHFIIVALSGFLVLVFGVLIGVFAFYNSKARAFLLPVVNFLYTIPSLALFALFIPVIGVGLKNALLVLVLYGLLPIVYSTYNALKEVREEVIKAAIGLGCNPKELFFRVHFLLAIPQILAGLRIAVVMLVAMAGIGALIGAGGLGQAIFRGLNTQNTTLLVAGSLIIALFSVLADKFVSVFQHENALQRLFSQNATQKQKRRVYTNLAVFLFLLLASALWLIPRNAIEEKPLVVATKPSSEQYILGEILSLLLEKHHIPIKRAFGIGGGTMNIHPALIRGDFDLYMEYTGTAWVNTLKNPLTQKVDFETIKKRYEKEFNLLWVGLLGFNNTYSLAISKEDAQKYAIETFSDLALHSQNFDFGAEFDFFEREDAFKGLMKAYRFHFRSLHEMDINLRYKSFESHKINALDVFTTDAQIKELDLKVLKDDKGFFPNYQAGIVIRKEIIKKYPEALKILEKLDSKINDETMQDLNYQVEVLKKSPKIVAKDFLERLGL</sequence>
<reference key="1">
    <citation type="journal article" date="2009" name="J. Bacteriol.">
        <title>The complete genome sequence of Helicobacter pylori strain G27.</title>
        <authorList>
            <person name="Baltrus D.A."/>
            <person name="Amieva M.R."/>
            <person name="Covacci A."/>
            <person name="Lowe T.M."/>
            <person name="Merrell D.S."/>
            <person name="Ottemann K.M."/>
            <person name="Stein M."/>
            <person name="Salama N.R."/>
            <person name="Guillemin K."/>
        </authorList>
    </citation>
    <scope>NUCLEOTIDE SEQUENCE [LARGE SCALE GENOMIC DNA]</scope>
    <source>
        <strain>G27</strain>
    </source>
</reference>
<reference key="2">
    <citation type="journal article" date="2022" name="Cell">
        <title>A microbial transporter of the dietary antioxidant ergothioneine.</title>
        <authorList>
            <person name="Dumitrescu D.G."/>
            <person name="Gordon E.M."/>
            <person name="Kovalyova Y."/>
            <person name="Seminara A.B."/>
            <person name="Duncan-Lowey B."/>
            <person name="Forster E.R."/>
            <person name="Zhou W."/>
            <person name="Booth C.J."/>
            <person name="Shen A."/>
            <person name="Kranzusch P.J."/>
            <person name="Hatzios S.K."/>
        </authorList>
    </citation>
    <scope>X-RAY CRYSTALLOGRAPHY (1.3 ANGSTROMS) OF 282-553 OF APOPROTEIN AND IN COMPLEX WITH ERGOTHIONEINE</scope>
    <scope>FUNCTION</scope>
    <scope>SUBUNIT</scope>
    <scope>SUBCELLULAR LOCATION</scope>
    <scope>DOMAIN</scope>
    <scope>DISRUPTION PHENOTYPE</scope>
    <scope>MUTAGENESIS OF TYR-390 AND ARG-454</scope>
    <source>
        <strain>G27</strain>
    </source>
</reference>